<organism>
    <name type="scientific">Streptomyces globisporus</name>
    <dbReference type="NCBI Taxonomy" id="1908"/>
    <lineage>
        <taxon>Bacteria</taxon>
        <taxon>Bacillati</taxon>
        <taxon>Actinomycetota</taxon>
        <taxon>Actinomycetes</taxon>
        <taxon>Kitasatosporales</taxon>
        <taxon>Streptomycetaceae</taxon>
        <taxon>Streptomyces</taxon>
    </lineage>
</organism>
<comment type="function">
    <text>This enzyme has both lysozyme (acetylmuramidase) and diacetylmuramidase activities.</text>
</comment>
<comment type="catalytic activity">
    <reaction>
        <text>Hydrolysis of (1-&gt;4)-beta-linkages between N-acetylmuramic acid and N-acetyl-D-glucosamine residues in a peptidoglycan and between N-acetyl-D-glucosamine residues in chitodextrins.</text>
        <dbReference type="EC" id="3.2.1.17"/>
    </reaction>
</comment>
<comment type="subcellular location">
    <subcellularLocation>
        <location>Secreted</location>
    </subcellularLocation>
</comment>
<comment type="similarity">
    <text evidence="2 5">Belongs to the glycosyl hydrolase 25 family.</text>
</comment>
<evidence type="ECO:0000255" key="1"/>
<evidence type="ECO:0000255" key="2">
    <source>
        <dbReference type="PROSITE-ProRule" id="PRU01252"/>
    </source>
</evidence>
<evidence type="ECO:0000255" key="3">
    <source>
        <dbReference type="PROSITE-ProRule" id="PRU10065"/>
    </source>
</evidence>
<evidence type="ECO:0000269" key="4">
    <source>
    </source>
</evidence>
<evidence type="ECO:0000305" key="5"/>
<evidence type="ECO:0007829" key="6">
    <source>
        <dbReference type="PDB" id="1JFX"/>
    </source>
</evidence>
<accession>P25310</accession>
<name>LYSM1_STRGL</name>
<reference key="1">
    <citation type="journal article" date="1990" name="Gene">
        <title>Cloning and nucleotide sequence of the N-acetylmuramidase M1-encoding gene from Streptomyces globisporus.</title>
        <authorList>
            <person name="Lichenstein H.S."/>
            <person name="Hastings A.E."/>
            <person name="Langley K.E."/>
            <person name="Mendiaz E.A."/>
            <person name="Rohde M.F."/>
            <person name="Elmore R."/>
            <person name="Zukowski M.M."/>
        </authorList>
    </citation>
    <scope>NUCLEOTIDE SEQUENCE [GENOMIC DNA]</scope>
    <scope>PROTEIN SEQUENCE OF 78-117</scope>
    <scope>DISULFIDE BOND</scope>
    <source>
        <strain>ATCC 21553 / DSM 40991 / FERM P-596</strain>
    </source>
</reference>
<protein>
    <recommendedName>
        <fullName>Lysozyme M1</fullName>
        <ecNumber>3.2.1.17</ecNumber>
    </recommendedName>
    <alternativeName>
        <fullName>1,4-beta-N-acetylmuramidase M1</fullName>
    </alternativeName>
</protein>
<keyword id="KW-0002">3D-structure</keyword>
<keyword id="KW-0929">Antimicrobial</keyword>
<keyword id="KW-0081">Bacteriolytic enzyme</keyword>
<keyword id="KW-0903">Direct protein sequencing</keyword>
<keyword id="KW-1015">Disulfide bond</keyword>
<keyword id="KW-0326">Glycosidase</keyword>
<keyword id="KW-0378">Hydrolase</keyword>
<keyword id="KW-0964">Secreted</keyword>
<keyword id="KW-0732">Signal</keyword>
<gene>
    <name type="primary">acm</name>
</gene>
<dbReference type="EC" id="3.2.1.17"/>
<dbReference type="EMBL" id="M30645">
    <property type="protein sequence ID" value="AAA26687.1"/>
    <property type="molecule type" value="Genomic_DNA"/>
</dbReference>
<dbReference type="PIR" id="JQ0529">
    <property type="entry name" value="MUSMM1"/>
</dbReference>
<dbReference type="PDB" id="1JFX">
    <property type="method" value="X-ray"/>
    <property type="resolution" value="1.65 A"/>
    <property type="chains" value="A=78-294"/>
</dbReference>
<dbReference type="PDBsum" id="1JFX"/>
<dbReference type="SMR" id="P25310"/>
<dbReference type="CAZy" id="GH25">
    <property type="family name" value="Glycoside Hydrolase Family 25"/>
</dbReference>
<dbReference type="EvolutionaryTrace" id="P25310"/>
<dbReference type="GO" id="GO:0005576">
    <property type="term" value="C:extracellular region"/>
    <property type="evidence" value="ECO:0007669"/>
    <property type="project" value="UniProtKB-SubCell"/>
</dbReference>
<dbReference type="GO" id="GO:0003796">
    <property type="term" value="F:lysozyme activity"/>
    <property type="evidence" value="ECO:0007669"/>
    <property type="project" value="UniProtKB-EC"/>
</dbReference>
<dbReference type="GO" id="GO:0016052">
    <property type="term" value="P:carbohydrate catabolic process"/>
    <property type="evidence" value="ECO:0007669"/>
    <property type="project" value="TreeGrafter"/>
</dbReference>
<dbReference type="GO" id="GO:0016998">
    <property type="term" value="P:cell wall macromolecule catabolic process"/>
    <property type="evidence" value="ECO:0007669"/>
    <property type="project" value="InterPro"/>
</dbReference>
<dbReference type="GO" id="GO:0042742">
    <property type="term" value="P:defense response to bacterium"/>
    <property type="evidence" value="ECO:0007669"/>
    <property type="project" value="UniProtKB-KW"/>
</dbReference>
<dbReference type="GO" id="GO:0031640">
    <property type="term" value="P:killing of cells of another organism"/>
    <property type="evidence" value="ECO:0007669"/>
    <property type="project" value="UniProtKB-KW"/>
</dbReference>
<dbReference type="GO" id="GO:0009253">
    <property type="term" value="P:peptidoglycan catabolic process"/>
    <property type="evidence" value="ECO:0007669"/>
    <property type="project" value="InterPro"/>
</dbReference>
<dbReference type="CDD" id="cd06412">
    <property type="entry name" value="GH25_CH-type"/>
    <property type="match status" value="1"/>
</dbReference>
<dbReference type="FunFam" id="3.20.20.80:FF:000060">
    <property type="entry name" value="Lysozyme M1"/>
    <property type="match status" value="1"/>
</dbReference>
<dbReference type="Gene3D" id="3.20.20.80">
    <property type="entry name" value="Glycosidases"/>
    <property type="match status" value="1"/>
</dbReference>
<dbReference type="InterPro" id="IPR002053">
    <property type="entry name" value="Glyco_hydro_25"/>
</dbReference>
<dbReference type="InterPro" id="IPR008270">
    <property type="entry name" value="Glyco_hydro_25_AS"/>
</dbReference>
<dbReference type="InterPro" id="IPR018077">
    <property type="entry name" value="Glyco_hydro_fam25_subgr"/>
</dbReference>
<dbReference type="InterPro" id="IPR017853">
    <property type="entry name" value="Glycoside_hydrolase_SF"/>
</dbReference>
<dbReference type="PANTHER" id="PTHR34135">
    <property type="entry name" value="LYSOZYME"/>
    <property type="match status" value="1"/>
</dbReference>
<dbReference type="PANTHER" id="PTHR34135:SF2">
    <property type="entry name" value="LYSOZYME"/>
    <property type="match status" value="1"/>
</dbReference>
<dbReference type="Pfam" id="PF01183">
    <property type="entry name" value="Glyco_hydro_25"/>
    <property type="match status" value="1"/>
</dbReference>
<dbReference type="SMART" id="SM00641">
    <property type="entry name" value="Glyco_25"/>
    <property type="match status" value="1"/>
</dbReference>
<dbReference type="SUPFAM" id="SSF51445">
    <property type="entry name" value="(Trans)glycosidases"/>
    <property type="match status" value="1"/>
</dbReference>
<dbReference type="PROSITE" id="PS00953">
    <property type="entry name" value="GLYCOSYL_HYDROL_F25_1"/>
    <property type="match status" value="1"/>
</dbReference>
<dbReference type="PROSITE" id="PS51904">
    <property type="entry name" value="GLYCOSYL_HYDROL_F25_2"/>
    <property type="match status" value="1"/>
</dbReference>
<feature type="signal peptide" evidence="1">
    <location>
        <begin position="1"/>
        <end status="unknown"/>
    </location>
</feature>
<feature type="propeptide" id="PRO_0000018517" evidence="4">
    <location>
        <begin status="unknown"/>
        <end position="77"/>
    </location>
</feature>
<feature type="chain" id="PRO_0000018518" description="Lysozyme M1">
    <location>
        <begin position="78"/>
        <end position="294"/>
    </location>
</feature>
<feature type="domain" description="Ch-type lysozyme" evidence="2">
    <location>
        <begin position="81"/>
        <end position="294"/>
    </location>
</feature>
<feature type="active site" evidence="2">
    <location>
        <position position="86"/>
    </location>
</feature>
<feature type="active site" evidence="2">
    <location>
        <position position="175"/>
    </location>
</feature>
<feature type="active site" evidence="2 3">
    <location>
        <position position="177"/>
    </location>
</feature>
<feature type="disulfide bond" evidence="4">
    <location>
        <begin position="185"/>
        <end position="224"/>
    </location>
</feature>
<feature type="strand" evidence="6">
    <location>
        <begin position="81"/>
        <end position="87"/>
    </location>
</feature>
<feature type="helix" evidence="6">
    <location>
        <begin position="89"/>
        <end position="91"/>
    </location>
</feature>
<feature type="helix" evidence="6">
    <location>
        <begin position="96"/>
        <end position="101"/>
    </location>
</feature>
<feature type="strand" evidence="6">
    <location>
        <begin position="106"/>
        <end position="113"/>
    </location>
</feature>
<feature type="turn" evidence="6">
    <location>
        <begin position="114"/>
        <end position="116"/>
    </location>
</feature>
<feature type="helix" evidence="6">
    <location>
        <begin position="122"/>
        <end position="131"/>
    </location>
</feature>
<feature type="strand" evidence="6">
    <location>
        <begin position="135"/>
        <end position="141"/>
    </location>
</feature>
<feature type="turn" evidence="6">
    <location>
        <begin position="144"/>
        <end position="146"/>
    </location>
</feature>
<feature type="helix" evidence="6">
    <location>
        <begin position="149"/>
        <end position="158"/>
    </location>
</feature>
<feature type="strand" evidence="6">
    <location>
        <begin position="166"/>
        <end position="169"/>
    </location>
</feature>
<feature type="strand" evidence="6">
    <location>
        <begin position="173"/>
        <end position="175"/>
    </location>
</feature>
<feature type="strand" evidence="6">
    <location>
        <begin position="180"/>
        <end position="182"/>
    </location>
</feature>
<feature type="turn" evidence="6">
    <location>
        <begin position="184"/>
        <end position="187"/>
    </location>
</feature>
<feature type="helix" evidence="6">
    <location>
        <begin position="190"/>
        <end position="208"/>
    </location>
</feature>
<feature type="strand" evidence="6">
    <location>
        <begin position="213"/>
        <end position="216"/>
    </location>
</feature>
<feature type="helix" evidence="6">
    <location>
        <begin position="218"/>
        <end position="225"/>
    </location>
</feature>
<feature type="turn" evidence="6">
    <location>
        <begin position="230"/>
        <end position="234"/>
    </location>
</feature>
<feature type="strand" evidence="6">
    <location>
        <begin position="237"/>
        <end position="240"/>
    </location>
</feature>
<feature type="strand" evidence="6">
    <location>
        <begin position="253"/>
        <end position="255"/>
    </location>
</feature>
<feature type="strand" evidence="6">
    <location>
        <begin position="257"/>
        <end position="267"/>
    </location>
</feature>
<feature type="strand" evidence="6">
    <location>
        <begin position="270"/>
        <end position="281"/>
    </location>
</feature>
<feature type="helix" evidence="6">
    <location>
        <begin position="283"/>
        <end position="291"/>
    </location>
</feature>
<proteinExistence type="evidence at protein level"/>
<sequence length="294" mass="31169">MPAYSSLARRGRRPAVVLLGGLVSASLALTLAPTAAAAPLAPPPGKDVGPGEAYMGVGTRIEQGLGAGPDERTIGPADTSGVQGIDVSHWQGSINWSSVKSAGMSFAYIKATEGTNYKDDRFSANYTNAYNAGIIRGAYHFARPNASSGTAQADYFASNGGGWSRDNRTLPGVLDIEHNPSGAMCYGLSTTQMRTWINDFHARYKARTTRDVVIYTTASWWNTCTGSWNGMAAKSPFWVAHWGVSAPTVPSGFPTWTFWQYSATGRVGGVSGDVDRNKFNGSAARLLALANNTA</sequence>